<sequence length="171" mass="19457">MIDTDGFRPNVGIILADGSGRVLWARRVGGQDAWQFPQGGIKESESAEQALYRELQEEVGLKAEDVEILAVTQGWLRYRLPQKLVRQKEPRCVGQKQKWFLLKMLAEDSAVDLIGGGPPEFDEWRWVSYWYPLSKVVSFKREVYRRALKELVAPHNSLLSGLPLVDGESLC</sequence>
<keyword id="KW-0378">Hydrolase</keyword>
<keyword id="KW-0479">Metal-binding</keyword>
<keyword id="KW-1185">Reference proteome</keyword>
<organism>
    <name type="scientific">Teredinibacter turnerae (strain ATCC 39867 / T7901)</name>
    <dbReference type="NCBI Taxonomy" id="377629"/>
    <lineage>
        <taxon>Bacteria</taxon>
        <taxon>Pseudomonadati</taxon>
        <taxon>Pseudomonadota</taxon>
        <taxon>Gammaproteobacteria</taxon>
        <taxon>Cellvibrionales</taxon>
        <taxon>Cellvibrionaceae</taxon>
        <taxon>Teredinibacter</taxon>
    </lineage>
</organism>
<gene>
    <name evidence="1" type="primary">rppH</name>
    <name evidence="1" type="synonym">nudH</name>
    <name type="ordered locus">TERTU_0362</name>
</gene>
<proteinExistence type="inferred from homology"/>
<name>RPPH_TERTT</name>
<feature type="chain" id="PRO_1000204940" description="RNA pyrophosphohydrolase">
    <location>
        <begin position="1"/>
        <end position="171"/>
    </location>
</feature>
<feature type="domain" description="Nudix hydrolase" evidence="1">
    <location>
        <begin position="6"/>
        <end position="149"/>
    </location>
</feature>
<feature type="short sequence motif" description="Nudix box">
    <location>
        <begin position="39"/>
        <end position="60"/>
    </location>
</feature>
<evidence type="ECO:0000255" key="1">
    <source>
        <dbReference type="HAMAP-Rule" id="MF_00298"/>
    </source>
</evidence>
<reference key="1">
    <citation type="journal article" date="2009" name="PLoS ONE">
        <title>The complete genome of Teredinibacter turnerae T7901: an intracellular endosymbiont of marine wood-boring bivalves (shipworms).</title>
        <authorList>
            <person name="Yang J.C."/>
            <person name="Madupu R."/>
            <person name="Durkin A.S."/>
            <person name="Ekborg N.A."/>
            <person name="Pedamallu C.S."/>
            <person name="Hostetler J.B."/>
            <person name="Radune D."/>
            <person name="Toms B.S."/>
            <person name="Henrissat B."/>
            <person name="Coutinho P.M."/>
            <person name="Schwarz S."/>
            <person name="Field L."/>
            <person name="Trindade-Silva A.E."/>
            <person name="Soares C.A.G."/>
            <person name="Elshahawi S."/>
            <person name="Hanora A."/>
            <person name="Schmidt E.W."/>
            <person name="Haygood M.G."/>
            <person name="Posfai J."/>
            <person name="Benner J."/>
            <person name="Madinger C."/>
            <person name="Nove J."/>
            <person name="Anton B."/>
            <person name="Chaudhary K."/>
            <person name="Foster J."/>
            <person name="Holman A."/>
            <person name="Kumar S."/>
            <person name="Lessard P.A."/>
            <person name="Luyten Y.A."/>
            <person name="Slatko B."/>
            <person name="Wood N."/>
            <person name="Wu B."/>
            <person name="Teplitski M."/>
            <person name="Mougous J.D."/>
            <person name="Ward N."/>
            <person name="Eisen J.A."/>
            <person name="Badger J.H."/>
            <person name="Distel D.L."/>
        </authorList>
    </citation>
    <scope>NUCLEOTIDE SEQUENCE [LARGE SCALE GENOMIC DNA]</scope>
    <source>
        <strain>ATCC 39867 / T7901</strain>
    </source>
</reference>
<dbReference type="EC" id="3.6.1.-" evidence="1"/>
<dbReference type="EMBL" id="CP001614">
    <property type="protein sequence ID" value="ACR11271.1"/>
    <property type="molecule type" value="Genomic_DNA"/>
</dbReference>
<dbReference type="RefSeq" id="WP_015817383.1">
    <property type="nucleotide sequence ID" value="NC_012997.1"/>
</dbReference>
<dbReference type="SMR" id="C5BMA0"/>
<dbReference type="STRING" id="377629.TERTU_0362"/>
<dbReference type="GeneID" id="58408220"/>
<dbReference type="KEGG" id="ttu:TERTU_0362"/>
<dbReference type="eggNOG" id="COG1051">
    <property type="taxonomic scope" value="Bacteria"/>
</dbReference>
<dbReference type="HOGENOM" id="CLU_087195_3_1_6"/>
<dbReference type="OrthoDB" id="9816040at2"/>
<dbReference type="Proteomes" id="UP000009080">
    <property type="component" value="Chromosome"/>
</dbReference>
<dbReference type="GO" id="GO:0046872">
    <property type="term" value="F:metal ion binding"/>
    <property type="evidence" value="ECO:0007669"/>
    <property type="project" value="UniProtKB-KW"/>
</dbReference>
<dbReference type="GO" id="GO:0016462">
    <property type="term" value="F:pyrophosphatase activity"/>
    <property type="evidence" value="ECO:0007669"/>
    <property type="project" value="UniProtKB-ARBA"/>
</dbReference>
<dbReference type="CDD" id="cd03671">
    <property type="entry name" value="NUDIX_Ap4A_hydrolase_plant_like"/>
    <property type="match status" value="1"/>
</dbReference>
<dbReference type="FunFam" id="3.90.79.10:FF:000001">
    <property type="entry name" value="RNA pyrophosphohydrolase"/>
    <property type="match status" value="1"/>
</dbReference>
<dbReference type="Gene3D" id="3.90.79.10">
    <property type="entry name" value="Nucleoside Triphosphate Pyrophosphohydrolase"/>
    <property type="match status" value="1"/>
</dbReference>
<dbReference type="HAMAP" id="MF_00298">
    <property type="entry name" value="Nudix_RppH"/>
    <property type="match status" value="1"/>
</dbReference>
<dbReference type="InterPro" id="IPR020476">
    <property type="entry name" value="Nudix_hydrolase"/>
</dbReference>
<dbReference type="InterPro" id="IPR015797">
    <property type="entry name" value="NUDIX_hydrolase-like_dom_sf"/>
</dbReference>
<dbReference type="InterPro" id="IPR020084">
    <property type="entry name" value="NUDIX_hydrolase_CS"/>
</dbReference>
<dbReference type="InterPro" id="IPR000086">
    <property type="entry name" value="NUDIX_hydrolase_dom"/>
</dbReference>
<dbReference type="InterPro" id="IPR022927">
    <property type="entry name" value="RppH"/>
</dbReference>
<dbReference type="NCBIfam" id="NF001934">
    <property type="entry name" value="PRK00714.1-1"/>
    <property type="match status" value="1"/>
</dbReference>
<dbReference type="NCBIfam" id="NF001937">
    <property type="entry name" value="PRK00714.1-4"/>
    <property type="match status" value="1"/>
</dbReference>
<dbReference type="NCBIfam" id="NF001938">
    <property type="entry name" value="PRK00714.1-5"/>
    <property type="match status" value="1"/>
</dbReference>
<dbReference type="PANTHER" id="PTHR43046">
    <property type="entry name" value="GDP-MANNOSE MANNOSYL HYDROLASE"/>
    <property type="match status" value="1"/>
</dbReference>
<dbReference type="PANTHER" id="PTHR43046:SF14">
    <property type="entry name" value="MUTT_NUDIX FAMILY PROTEIN"/>
    <property type="match status" value="1"/>
</dbReference>
<dbReference type="Pfam" id="PF00293">
    <property type="entry name" value="NUDIX"/>
    <property type="match status" value="1"/>
</dbReference>
<dbReference type="PRINTS" id="PR00502">
    <property type="entry name" value="NUDIXFAMILY"/>
</dbReference>
<dbReference type="SUPFAM" id="SSF55811">
    <property type="entry name" value="Nudix"/>
    <property type="match status" value="1"/>
</dbReference>
<dbReference type="PROSITE" id="PS51462">
    <property type="entry name" value="NUDIX"/>
    <property type="match status" value="1"/>
</dbReference>
<dbReference type="PROSITE" id="PS00893">
    <property type="entry name" value="NUDIX_BOX"/>
    <property type="match status" value="1"/>
</dbReference>
<accession>C5BMA0</accession>
<comment type="function">
    <text evidence="1">Accelerates the degradation of transcripts by removing pyrophosphate from the 5'-end of triphosphorylated RNA, leading to a more labile monophosphorylated state that can stimulate subsequent ribonuclease cleavage.</text>
</comment>
<comment type="cofactor">
    <cofactor evidence="1">
        <name>a divalent metal cation</name>
        <dbReference type="ChEBI" id="CHEBI:60240"/>
    </cofactor>
</comment>
<comment type="similarity">
    <text evidence="1">Belongs to the Nudix hydrolase family. RppH subfamily.</text>
</comment>
<protein>
    <recommendedName>
        <fullName evidence="1">RNA pyrophosphohydrolase</fullName>
        <ecNumber evidence="1">3.6.1.-</ecNumber>
    </recommendedName>
    <alternativeName>
        <fullName evidence="1">(Di)nucleoside polyphosphate hydrolase</fullName>
    </alternativeName>
</protein>